<feature type="signal peptide" evidence="2">
    <location>
        <begin position="1"/>
        <end position="20"/>
    </location>
</feature>
<feature type="propeptide" id="PRO_0000401023" evidence="1">
    <location>
        <begin position="21"/>
        <end position="56"/>
    </location>
</feature>
<feature type="peptide" id="PRO_0000401024" description="Hainantoxin-XV-4">
    <location>
        <begin position="57"/>
        <end position="117"/>
    </location>
</feature>
<feature type="region of interest" description="Disordered" evidence="3">
    <location>
        <begin position="20"/>
        <end position="55"/>
    </location>
</feature>
<feature type="compositionally biased region" description="Basic and acidic residues" evidence="3">
    <location>
        <begin position="23"/>
        <end position="55"/>
    </location>
</feature>
<feature type="disulfide bond" evidence="4">
    <location>
        <begin position="58"/>
        <end position="72"/>
    </location>
</feature>
<feature type="disulfide bond" evidence="4">
    <location>
        <begin position="65"/>
        <end position="78"/>
    </location>
</feature>
<feature type="disulfide bond" evidence="4">
    <location>
        <begin position="69"/>
        <end position="115"/>
    </location>
</feature>
<feature type="disulfide bond" evidence="4">
    <location>
        <begin position="71"/>
        <end position="91"/>
    </location>
</feature>
<protein>
    <recommendedName>
        <fullName>Hainantoxin-XV-4</fullName>
        <shortName>HNTX-XV-4</shortName>
    </recommendedName>
</protein>
<accession>D2Y2D8</accession>
<reference key="1">
    <citation type="journal article" date="2010" name="J. Proteome Res.">
        <title>Molecular diversification of peptide toxins from the tarantula Haplopelma hainanum (Ornithoctonus hainana) venom based on transcriptomic, peptidomic, and genomic analyses.</title>
        <authorList>
            <person name="Tang X."/>
            <person name="Zhang Y."/>
            <person name="Hu W."/>
            <person name="Xu D."/>
            <person name="Tao H."/>
            <person name="Yang X."/>
            <person name="Li Y."/>
            <person name="Jiang L."/>
            <person name="Liang S."/>
        </authorList>
    </citation>
    <scope>NUCLEOTIDE SEQUENCE [LARGE SCALE MRNA]</scope>
    <source>
        <tissue>Venom gland</tissue>
    </source>
</reference>
<name>TX32F_CYRHA</name>
<sequence length="117" mass="13048">MKLCAVIIASLLVCVAVASSSDNQKEFAQEKEMTREETQSLGEHEKDDEVTGSEERSCIEEWKTCENDCECCGMSTLCAASWVDGHEIKLCRNEGGKLKKVLHFIQKSVSKIKSCKK</sequence>
<organism>
    <name type="scientific">Cyriopagopus hainanus</name>
    <name type="common">Chinese bird spider</name>
    <name type="synonym">Haplopelma hainanum</name>
    <dbReference type="NCBI Taxonomy" id="209901"/>
    <lineage>
        <taxon>Eukaryota</taxon>
        <taxon>Metazoa</taxon>
        <taxon>Ecdysozoa</taxon>
        <taxon>Arthropoda</taxon>
        <taxon>Chelicerata</taxon>
        <taxon>Arachnida</taxon>
        <taxon>Araneae</taxon>
        <taxon>Mygalomorphae</taxon>
        <taxon>Theraphosidae</taxon>
        <taxon>Haplopelma</taxon>
    </lineage>
</organism>
<keyword id="KW-1015">Disulfide bond</keyword>
<keyword id="KW-0872">Ion channel impairing toxin</keyword>
<keyword id="KW-0960">Knottin</keyword>
<keyword id="KW-0964">Secreted</keyword>
<keyword id="KW-0732">Signal</keyword>
<keyword id="KW-0800">Toxin</keyword>
<dbReference type="EMBL" id="GU293015">
    <property type="protein sequence ID" value="ADB56831.1"/>
    <property type="molecule type" value="mRNA"/>
</dbReference>
<dbReference type="ArachnoServer" id="AS001957">
    <property type="toxin name" value="U10-theraphotoxin-Hhn1d"/>
</dbReference>
<dbReference type="GO" id="GO:0005576">
    <property type="term" value="C:extracellular region"/>
    <property type="evidence" value="ECO:0007669"/>
    <property type="project" value="UniProtKB-SubCell"/>
</dbReference>
<dbReference type="GO" id="GO:0099106">
    <property type="term" value="F:ion channel regulator activity"/>
    <property type="evidence" value="ECO:0007669"/>
    <property type="project" value="UniProtKB-KW"/>
</dbReference>
<dbReference type="GO" id="GO:0090729">
    <property type="term" value="F:toxin activity"/>
    <property type="evidence" value="ECO:0007669"/>
    <property type="project" value="UniProtKB-KW"/>
</dbReference>
<proteinExistence type="evidence at transcript level"/>
<comment type="function">
    <text>Putative ion channel inhibitor.</text>
</comment>
<comment type="subcellular location">
    <subcellularLocation>
        <location evidence="1">Secreted</location>
    </subcellularLocation>
</comment>
<comment type="tissue specificity">
    <text>Expressed by the venom gland.</text>
</comment>
<comment type="domain">
    <text evidence="4">The presence of a 'disulfide through disulfide knot' structurally defines this protein as a knottin.</text>
</comment>
<comment type="similarity">
    <text>Belongs to the neurotoxin 03 (Tx2) family. 02 subfamily. HNTX-XV sub-subfamily.</text>
</comment>
<evidence type="ECO:0000250" key="1"/>
<evidence type="ECO:0000255" key="2"/>
<evidence type="ECO:0000256" key="3">
    <source>
        <dbReference type="SAM" id="MobiDB-lite"/>
    </source>
</evidence>
<evidence type="ECO:0000305" key="4"/>